<reference key="1">
    <citation type="journal article" date="2005" name="J. Bacteriol.">
        <title>Insights into genome plasticity and pathogenicity of the plant pathogenic Bacterium Xanthomonas campestris pv. vesicatoria revealed by the complete genome sequence.</title>
        <authorList>
            <person name="Thieme F."/>
            <person name="Koebnik R."/>
            <person name="Bekel T."/>
            <person name="Berger C."/>
            <person name="Boch J."/>
            <person name="Buettner D."/>
            <person name="Caldana C."/>
            <person name="Gaigalat L."/>
            <person name="Goesmann A."/>
            <person name="Kay S."/>
            <person name="Kirchner O."/>
            <person name="Lanz C."/>
            <person name="Linke B."/>
            <person name="McHardy A.C."/>
            <person name="Meyer F."/>
            <person name="Mittenhuber G."/>
            <person name="Nies D.H."/>
            <person name="Niesbach-Kloesgen U."/>
            <person name="Patschkowski T."/>
            <person name="Rueckert C."/>
            <person name="Rupp O."/>
            <person name="Schneiker S."/>
            <person name="Schuster S.C."/>
            <person name="Vorhoelter F.J."/>
            <person name="Weber E."/>
            <person name="Puehler A."/>
            <person name="Bonas U."/>
            <person name="Bartels D."/>
            <person name="Kaiser O."/>
        </authorList>
    </citation>
    <scope>NUCLEOTIDE SEQUENCE [LARGE SCALE GENOMIC DNA]</scope>
    <source>
        <strain>85-10</strain>
    </source>
</reference>
<proteinExistence type="inferred from homology"/>
<feature type="chain" id="PRO_0000076844" description="3-isopropylmalate dehydratase large subunit">
    <location>
        <begin position="1"/>
        <end position="482"/>
    </location>
</feature>
<feature type="region of interest" description="Disordered" evidence="2">
    <location>
        <begin position="60"/>
        <end position="79"/>
    </location>
</feature>
<feature type="binding site" evidence="1">
    <location>
        <position position="353"/>
    </location>
    <ligand>
        <name>[4Fe-4S] cluster</name>
        <dbReference type="ChEBI" id="CHEBI:49883"/>
    </ligand>
</feature>
<feature type="binding site" evidence="1">
    <location>
        <position position="414"/>
    </location>
    <ligand>
        <name>[4Fe-4S] cluster</name>
        <dbReference type="ChEBI" id="CHEBI:49883"/>
    </ligand>
</feature>
<feature type="binding site" evidence="1">
    <location>
        <position position="417"/>
    </location>
    <ligand>
        <name>[4Fe-4S] cluster</name>
        <dbReference type="ChEBI" id="CHEBI:49883"/>
    </ligand>
</feature>
<gene>
    <name evidence="1" type="primary">leuC</name>
    <name type="ordered locus">XCV3586</name>
</gene>
<accession>Q3BPJ6</accession>
<keyword id="KW-0004">4Fe-4S</keyword>
<keyword id="KW-0028">Amino-acid biosynthesis</keyword>
<keyword id="KW-0100">Branched-chain amino acid biosynthesis</keyword>
<keyword id="KW-0408">Iron</keyword>
<keyword id="KW-0411">Iron-sulfur</keyword>
<keyword id="KW-0432">Leucine biosynthesis</keyword>
<keyword id="KW-0456">Lyase</keyword>
<keyword id="KW-0479">Metal-binding</keyword>
<evidence type="ECO:0000255" key="1">
    <source>
        <dbReference type="HAMAP-Rule" id="MF_01026"/>
    </source>
</evidence>
<evidence type="ECO:0000256" key="2">
    <source>
        <dbReference type="SAM" id="MobiDB-lite"/>
    </source>
</evidence>
<protein>
    <recommendedName>
        <fullName evidence="1">3-isopropylmalate dehydratase large subunit</fullName>
        <ecNumber evidence="1">4.2.1.33</ecNumber>
    </recommendedName>
    <alternativeName>
        <fullName evidence="1">Alpha-IPM isomerase</fullName>
        <shortName evidence="1">IPMI</shortName>
    </alternativeName>
    <alternativeName>
        <fullName evidence="1">Isopropylmalate isomerase</fullName>
    </alternativeName>
</protein>
<comment type="function">
    <text evidence="1">Catalyzes the isomerization between 2-isopropylmalate and 3-isopropylmalate, via the formation of 2-isopropylmaleate.</text>
</comment>
<comment type="catalytic activity">
    <reaction evidence="1">
        <text>(2R,3S)-3-isopropylmalate = (2S)-2-isopropylmalate</text>
        <dbReference type="Rhea" id="RHEA:32287"/>
        <dbReference type="ChEBI" id="CHEBI:1178"/>
        <dbReference type="ChEBI" id="CHEBI:35121"/>
        <dbReference type="EC" id="4.2.1.33"/>
    </reaction>
</comment>
<comment type="cofactor">
    <cofactor evidence="1">
        <name>[4Fe-4S] cluster</name>
        <dbReference type="ChEBI" id="CHEBI:49883"/>
    </cofactor>
    <text evidence="1">Binds 1 [4Fe-4S] cluster per subunit.</text>
</comment>
<comment type="pathway">
    <text evidence="1">Amino-acid biosynthesis; L-leucine biosynthesis; L-leucine from 3-methyl-2-oxobutanoate: step 2/4.</text>
</comment>
<comment type="subunit">
    <text evidence="1">Heterodimer of LeuC and LeuD.</text>
</comment>
<comment type="similarity">
    <text evidence="1">Belongs to the aconitase/IPM isomerase family. LeuC type 1 subfamily.</text>
</comment>
<dbReference type="EC" id="4.2.1.33" evidence="1"/>
<dbReference type="EMBL" id="AM039952">
    <property type="protein sequence ID" value="CAJ25317.1"/>
    <property type="molecule type" value="Genomic_DNA"/>
</dbReference>
<dbReference type="RefSeq" id="WP_011348523.1">
    <property type="nucleotide sequence ID" value="NZ_CP017190.1"/>
</dbReference>
<dbReference type="SMR" id="Q3BPJ6"/>
<dbReference type="STRING" id="456327.BJD11_04785"/>
<dbReference type="KEGG" id="xcv:XCV3586"/>
<dbReference type="eggNOG" id="COG0065">
    <property type="taxonomic scope" value="Bacteria"/>
</dbReference>
<dbReference type="HOGENOM" id="CLU_006714_3_4_6"/>
<dbReference type="UniPathway" id="UPA00048">
    <property type="reaction ID" value="UER00071"/>
</dbReference>
<dbReference type="Proteomes" id="UP000007069">
    <property type="component" value="Chromosome"/>
</dbReference>
<dbReference type="GO" id="GO:0003861">
    <property type="term" value="F:3-isopropylmalate dehydratase activity"/>
    <property type="evidence" value="ECO:0007669"/>
    <property type="project" value="UniProtKB-UniRule"/>
</dbReference>
<dbReference type="GO" id="GO:0051539">
    <property type="term" value="F:4 iron, 4 sulfur cluster binding"/>
    <property type="evidence" value="ECO:0007669"/>
    <property type="project" value="UniProtKB-KW"/>
</dbReference>
<dbReference type="GO" id="GO:0046872">
    <property type="term" value="F:metal ion binding"/>
    <property type="evidence" value="ECO:0007669"/>
    <property type="project" value="UniProtKB-KW"/>
</dbReference>
<dbReference type="GO" id="GO:0009098">
    <property type="term" value="P:L-leucine biosynthetic process"/>
    <property type="evidence" value="ECO:0007669"/>
    <property type="project" value="UniProtKB-UniRule"/>
</dbReference>
<dbReference type="CDD" id="cd01583">
    <property type="entry name" value="IPMI"/>
    <property type="match status" value="1"/>
</dbReference>
<dbReference type="FunFam" id="3.30.499.10:FF:000007">
    <property type="entry name" value="3-isopropylmalate dehydratase large subunit"/>
    <property type="match status" value="1"/>
</dbReference>
<dbReference type="Gene3D" id="3.30.499.10">
    <property type="entry name" value="Aconitase, domain 3"/>
    <property type="match status" value="2"/>
</dbReference>
<dbReference type="HAMAP" id="MF_01026">
    <property type="entry name" value="LeuC_type1"/>
    <property type="match status" value="1"/>
</dbReference>
<dbReference type="InterPro" id="IPR004430">
    <property type="entry name" value="3-IsopropMal_deHydase_lsu"/>
</dbReference>
<dbReference type="InterPro" id="IPR015931">
    <property type="entry name" value="Acnase/IPM_dHydase_lsu_aba_1/3"/>
</dbReference>
<dbReference type="InterPro" id="IPR001030">
    <property type="entry name" value="Acoase/IPM_deHydtase_lsu_aba"/>
</dbReference>
<dbReference type="InterPro" id="IPR018136">
    <property type="entry name" value="Aconitase_4Fe-4S_BS"/>
</dbReference>
<dbReference type="InterPro" id="IPR036008">
    <property type="entry name" value="Aconitase_4Fe-4S_dom"/>
</dbReference>
<dbReference type="InterPro" id="IPR050067">
    <property type="entry name" value="IPM_dehydratase_rel_enz"/>
</dbReference>
<dbReference type="InterPro" id="IPR033941">
    <property type="entry name" value="IPMI_cat"/>
</dbReference>
<dbReference type="NCBIfam" id="TIGR00170">
    <property type="entry name" value="leuC"/>
    <property type="match status" value="1"/>
</dbReference>
<dbReference type="NCBIfam" id="NF004016">
    <property type="entry name" value="PRK05478.1"/>
    <property type="match status" value="1"/>
</dbReference>
<dbReference type="NCBIfam" id="NF009116">
    <property type="entry name" value="PRK12466.1"/>
    <property type="match status" value="1"/>
</dbReference>
<dbReference type="PANTHER" id="PTHR43822:SF9">
    <property type="entry name" value="3-ISOPROPYLMALATE DEHYDRATASE"/>
    <property type="match status" value="1"/>
</dbReference>
<dbReference type="PANTHER" id="PTHR43822">
    <property type="entry name" value="HOMOACONITASE, MITOCHONDRIAL-RELATED"/>
    <property type="match status" value="1"/>
</dbReference>
<dbReference type="Pfam" id="PF00330">
    <property type="entry name" value="Aconitase"/>
    <property type="match status" value="1"/>
</dbReference>
<dbReference type="PRINTS" id="PR00415">
    <property type="entry name" value="ACONITASE"/>
</dbReference>
<dbReference type="SUPFAM" id="SSF53732">
    <property type="entry name" value="Aconitase iron-sulfur domain"/>
    <property type="match status" value="1"/>
</dbReference>
<dbReference type="PROSITE" id="PS00450">
    <property type="entry name" value="ACONITASE_1"/>
    <property type="match status" value="1"/>
</dbReference>
<dbReference type="PROSITE" id="PS01244">
    <property type="entry name" value="ACONITASE_2"/>
    <property type="match status" value="1"/>
</dbReference>
<name>LEUC_XANE5</name>
<sequence length="482" mass="51469">MTAKTLYDKLWDLHEVTRRDDGSSLIYIDRHILHEVTSPQAFEGLRLAGRKPWRIDANIATPDHNVPTTRAERQGGLESISDEVSRLQVQTLDENCDDFGILEFKMNDTRQGIVHVVGPEQGATLPGMTVVCGDSHTSTHGAFGALAHGIGTSEVEHVLATQCLIAKKMKNMQVRVEGTLPFGVTAKDIVLAVIGKIGTAGGNGHALEFAGSAIRAASMEGRMTICNMAIEAGARVGMVAVDEKTIAYVKGRPFAPKGAHWDAAVALWSTLVSDPDAHFDTVVELRAEDIKPQVSWGTSPEMVLAIDQHVPDPAAEQDPTKRDSIERALKYMGLTANQPITAIRLDRVFIGSCTNSRIEDLRAAAAVAKGRKVASTIKQALVVPGSGLVKAQAEAEGLDKVFLDAGFEWREPGCSMCLAMNPDKLGSGEHCASTSNRNFEGRQGAGGRTHLVSPAMAAAAAVSGHFVDVRELGDSGVGIRDS</sequence>
<organism>
    <name type="scientific">Xanthomonas euvesicatoria pv. vesicatoria (strain 85-10)</name>
    <name type="common">Xanthomonas campestris pv. vesicatoria</name>
    <dbReference type="NCBI Taxonomy" id="316273"/>
    <lineage>
        <taxon>Bacteria</taxon>
        <taxon>Pseudomonadati</taxon>
        <taxon>Pseudomonadota</taxon>
        <taxon>Gammaproteobacteria</taxon>
        <taxon>Lysobacterales</taxon>
        <taxon>Lysobacteraceae</taxon>
        <taxon>Xanthomonas</taxon>
    </lineage>
</organism>